<gene>
    <name evidence="1" type="primary">prfC</name>
    <name type="ordered locus">glr3159</name>
</gene>
<feature type="chain" id="PRO_0000210942" description="Peptide chain release factor 3">
    <location>
        <begin position="1"/>
        <end position="531"/>
    </location>
</feature>
<feature type="domain" description="tr-type G">
    <location>
        <begin position="11"/>
        <end position="280"/>
    </location>
</feature>
<feature type="binding site" evidence="1">
    <location>
        <begin position="20"/>
        <end position="27"/>
    </location>
    <ligand>
        <name>GTP</name>
        <dbReference type="ChEBI" id="CHEBI:37565"/>
    </ligand>
</feature>
<feature type="binding site" evidence="1">
    <location>
        <begin position="88"/>
        <end position="92"/>
    </location>
    <ligand>
        <name>GTP</name>
        <dbReference type="ChEBI" id="CHEBI:37565"/>
    </ligand>
</feature>
<feature type="binding site" evidence="1">
    <location>
        <begin position="142"/>
        <end position="145"/>
    </location>
    <ligand>
        <name>GTP</name>
        <dbReference type="ChEBI" id="CHEBI:37565"/>
    </ligand>
</feature>
<proteinExistence type="inferred from homology"/>
<organism>
    <name type="scientific">Gloeobacter violaceus (strain ATCC 29082 / PCC 7421)</name>
    <dbReference type="NCBI Taxonomy" id="251221"/>
    <lineage>
        <taxon>Bacteria</taxon>
        <taxon>Bacillati</taxon>
        <taxon>Cyanobacteriota</taxon>
        <taxon>Cyanophyceae</taxon>
        <taxon>Gloeobacterales</taxon>
        <taxon>Gloeobacteraceae</taxon>
        <taxon>Gloeobacter</taxon>
    </lineage>
</organism>
<evidence type="ECO:0000255" key="1">
    <source>
        <dbReference type="HAMAP-Rule" id="MF_00072"/>
    </source>
</evidence>
<sequence>MSNPTLAAEVGRRRTFAIISHPDAGKTTLTEKLLLYGGAIDMAGSVRARRNQRHATSDWMAMEQQRGISITSTVLQFVYRDCQINLLDTPGHQDFSEDTYRTLAAADNAAMLIDAAKGIEAQTRKLFDVCRMRGIPIFTFINKLDRPGREPLELLDEIEKVLGIDVYPVNWPIGMGDTFRGVFDRLEHTVHLFDRTTGGKKMAPVTVGAIGDERMRVLMDEGTYAQIVEEIELLDGVGVPFDIERVAQGKLTPVFFGSAANNFGVQLFLDAFIRFASRPGTRSANTGVISPVAEDFSGFVFKIQANMDPQHRDRVAFIRVCSGKFEKDMTVHHTRSGKKVRLSRSLKLFGQERETVEEAYAGDIVGVINPGTFAIGDTICLGKPLAFEGIPLFPPEHFATLRNPNPSKYKQFLKGVTQLREEGAVQVLFHQDEAKRDPILAAVGQLQFDVVRFRLESEYHVETILEPLPWTLARWITAKQLEDLETIDWYFDSLGLKDHEGRLVILFKTPWGFQQMSERNPHLQFHEIAPL</sequence>
<keyword id="KW-0963">Cytoplasm</keyword>
<keyword id="KW-0342">GTP-binding</keyword>
<keyword id="KW-0547">Nucleotide-binding</keyword>
<keyword id="KW-0648">Protein biosynthesis</keyword>
<keyword id="KW-1185">Reference proteome</keyword>
<reference key="1">
    <citation type="journal article" date="2003" name="DNA Res.">
        <title>Complete genome structure of Gloeobacter violaceus PCC 7421, a cyanobacterium that lacks thylakoids.</title>
        <authorList>
            <person name="Nakamura Y."/>
            <person name="Kaneko T."/>
            <person name="Sato S."/>
            <person name="Mimuro M."/>
            <person name="Miyashita H."/>
            <person name="Tsuchiya T."/>
            <person name="Sasamoto S."/>
            <person name="Watanabe A."/>
            <person name="Kawashima K."/>
            <person name="Kishida Y."/>
            <person name="Kiyokawa C."/>
            <person name="Kohara M."/>
            <person name="Matsumoto M."/>
            <person name="Matsuno A."/>
            <person name="Nakazaki N."/>
            <person name="Shimpo S."/>
            <person name="Takeuchi C."/>
            <person name="Yamada M."/>
            <person name="Tabata S."/>
        </authorList>
    </citation>
    <scope>NUCLEOTIDE SEQUENCE [LARGE SCALE GENOMIC DNA]</scope>
    <source>
        <strain>ATCC 29082 / PCC 7421</strain>
    </source>
</reference>
<name>RF3_GLOVI</name>
<comment type="function">
    <text evidence="1">Increases the formation of ribosomal termination complexes and stimulates activities of RF-1 and RF-2. It binds guanine nucleotides and has strong preference for UGA stop codons. It may interact directly with the ribosome. The stimulation of RF-1 and RF-2 is significantly reduced by GTP and GDP, but not by GMP.</text>
</comment>
<comment type="subcellular location">
    <subcellularLocation>
        <location evidence="1">Cytoplasm</location>
    </subcellularLocation>
</comment>
<comment type="similarity">
    <text evidence="1">Belongs to the TRAFAC class translation factor GTPase superfamily. Classic translation factor GTPase family. PrfC subfamily.</text>
</comment>
<dbReference type="EMBL" id="BA000045">
    <property type="protein sequence ID" value="BAC91100.1"/>
    <property type="molecule type" value="Genomic_DNA"/>
</dbReference>
<dbReference type="RefSeq" id="NP_926105.1">
    <property type="nucleotide sequence ID" value="NC_005125.1"/>
</dbReference>
<dbReference type="RefSeq" id="WP_011143151.1">
    <property type="nucleotide sequence ID" value="NC_005125.1"/>
</dbReference>
<dbReference type="SMR" id="Q7NGL0"/>
<dbReference type="STRING" id="251221.gene:10760665"/>
<dbReference type="EnsemblBacteria" id="BAC91100">
    <property type="protein sequence ID" value="BAC91100"/>
    <property type="gene ID" value="BAC91100"/>
</dbReference>
<dbReference type="KEGG" id="gvi:glr3159"/>
<dbReference type="PATRIC" id="fig|251221.4.peg.3190"/>
<dbReference type="eggNOG" id="COG4108">
    <property type="taxonomic scope" value="Bacteria"/>
</dbReference>
<dbReference type="HOGENOM" id="CLU_002794_2_1_3"/>
<dbReference type="InParanoid" id="Q7NGL0"/>
<dbReference type="OrthoDB" id="580826at2"/>
<dbReference type="PhylomeDB" id="Q7NGL0"/>
<dbReference type="Proteomes" id="UP000000557">
    <property type="component" value="Chromosome"/>
</dbReference>
<dbReference type="GO" id="GO:0005829">
    <property type="term" value="C:cytosol"/>
    <property type="evidence" value="ECO:0000318"/>
    <property type="project" value="GO_Central"/>
</dbReference>
<dbReference type="GO" id="GO:0005525">
    <property type="term" value="F:GTP binding"/>
    <property type="evidence" value="ECO:0007669"/>
    <property type="project" value="UniProtKB-UniRule"/>
</dbReference>
<dbReference type="GO" id="GO:0003924">
    <property type="term" value="F:GTPase activity"/>
    <property type="evidence" value="ECO:0007669"/>
    <property type="project" value="InterPro"/>
</dbReference>
<dbReference type="GO" id="GO:0016150">
    <property type="term" value="F:translation release factor activity, codon nonspecific"/>
    <property type="evidence" value="ECO:0000318"/>
    <property type="project" value="GO_Central"/>
</dbReference>
<dbReference type="GO" id="GO:0016149">
    <property type="term" value="F:translation release factor activity, codon specific"/>
    <property type="evidence" value="ECO:0007669"/>
    <property type="project" value="UniProtKB-UniRule"/>
</dbReference>
<dbReference type="GO" id="GO:0006449">
    <property type="term" value="P:regulation of translational termination"/>
    <property type="evidence" value="ECO:0007669"/>
    <property type="project" value="UniProtKB-UniRule"/>
</dbReference>
<dbReference type="GO" id="GO:0006415">
    <property type="term" value="P:translational termination"/>
    <property type="evidence" value="ECO:0000318"/>
    <property type="project" value="GO_Central"/>
</dbReference>
<dbReference type="CDD" id="cd04169">
    <property type="entry name" value="RF3"/>
    <property type="match status" value="1"/>
</dbReference>
<dbReference type="CDD" id="cd03689">
    <property type="entry name" value="RF3_II"/>
    <property type="match status" value="1"/>
</dbReference>
<dbReference type="FunFam" id="2.40.30.10:FF:000040">
    <property type="entry name" value="Peptide chain release factor 3"/>
    <property type="match status" value="1"/>
</dbReference>
<dbReference type="FunFam" id="3.30.70.3280:FF:000001">
    <property type="entry name" value="Peptide chain release factor 3"/>
    <property type="match status" value="1"/>
</dbReference>
<dbReference type="FunFam" id="3.40.50.300:FF:000542">
    <property type="entry name" value="Peptide chain release factor 3"/>
    <property type="match status" value="1"/>
</dbReference>
<dbReference type="Gene3D" id="3.40.50.300">
    <property type="entry name" value="P-loop containing nucleotide triphosphate hydrolases"/>
    <property type="match status" value="1"/>
</dbReference>
<dbReference type="Gene3D" id="3.30.70.3280">
    <property type="entry name" value="Peptide chain release factor 3, domain III"/>
    <property type="match status" value="1"/>
</dbReference>
<dbReference type="Gene3D" id="2.40.30.10">
    <property type="entry name" value="Translation factors"/>
    <property type="match status" value="1"/>
</dbReference>
<dbReference type="HAMAP" id="MF_00072">
    <property type="entry name" value="Rel_fac_3"/>
    <property type="match status" value="1"/>
</dbReference>
<dbReference type="InterPro" id="IPR053905">
    <property type="entry name" value="EF-G-like_DII"/>
</dbReference>
<dbReference type="InterPro" id="IPR035647">
    <property type="entry name" value="EFG_III/V"/>
</dbReference>
<dbReference type="InterPro" id="IPR031157">
    <property type="entry name" value="G_TR_CS"/>
</dbReference>
<dbReference type="InterPro" id="IPR027417">
    <property type="entry name" value="P-loop_NTPase"/>
</dbReference>
<dbReference type="InterPro" id="IPR004548">
    <property type="entry name" value="PrfC"/>
</dbReference>
<dbReference type="InterPro" id="IPR032090">
    <property type="entry name" value="RF3_C"/>
</dbReference>
<dbReference type="InterPro" id="IPR038467">
    <property type="entry name" value="RF3_dom_3_sf"/>
</dbReference>
<dbReference type="InterPro" id="IPR041732">
    <property type="entry name" value="RF3_GTP-bd"/>
</dbReference>
<dbReference type="InterPro" id="IPR005225">
    <property type="entry name" value="Small_GTP-bd"/>
</dbReference>
<dbReference type="InterPro" id="IPR000795">
    <property type="entry name" value="T_Tr_GTP-bd_dom"/>
</dbReference>
<dbReference type="InterPro" id="IPR009000">
    <property type="entry name" value="Transl_B-barrel_sf"/>
</dbReference>
<dbReference type="NCBIfam" id="TIGR00503">
    <property type="entry name" value="prfC"/>
    <property type="match status" value="1"/>
</dbReference>
<dbReference type="NCBIfam" id="NF001964">
    <property type="entry name" value="PRK00741.1"/>
    <property type="match status" value="1"/>
</dbReference>
<dbReference type="NCBIfam" id="TIGR00231">
    <property type="entry name" value="small_GTP"/>
    <property type="match status" value="1"/>
</dbReference>
<dbReference type="PANTHER" id="PTHR43556">
    <property type="entry name" value="PEPTIDE CHAIN RELEASE FACTOR RF3"/>
    <property type="match status" value="1"/>
</dbReference>
<dbReference type="PANTHER" id="PTHR43556:SF2">
    <property type="entry name" value="PEPTIDE CHAIN RELEASE FACTOR RF3"/>
    <property type="match status" value="1"/>
</dbReference>
<dbReference type="Pfam" id="PF22042">
    <property type="entry name" value="EF-G_D2"/>
    <property type="match status" value="1"/>
</dbReference>
<dbReference type="Pfam" id="PF00009">
    <property type="entry name" value="GTP_EFTU"/>
    <property type="match status" value="1"/>
</dbReference>
<dbReference type="Pfam" id="PF16658">
    <property type="entry name" value="RF3_C"/>
    <property type="match status" value="1"/>
</dbReference>
<dbReference type="PRINTS" id="PR00315">
    <property type="entry name" value="ELONGATNFCT"/>
</dbReference>
<dbReference type="SUPFAM" id="SSF54980">
    <property type="entry name" value="EF-G C-terminal domain-like"/>
    <property type="match status" value="1"/>
</dbReference>
<dbReference type="SUPFAM" id="SSF52540">
    <property type="entry name" value="P-loop containing nucleoside triphosphate hydrolases"/>
    <property type="match status" value="1"/>
</dbReference>
<dbReference type="SUPFAM" id="SSF50447">
    <property type="entry name" value="Translation proteins"/>
    <property type="match status" value="1"/>
</dbReference>
<dbReference type="PROSITE" id="PS00301">
    <property type="entry name" value="G_TR_1"/>
    <property type="match status" value="1"/>
</dbReference>
<dbReference type="PROSITE" id="PS51722">
    <property type="entry name" value="G_TR_2"/>
    <property type="match status" value="1"/>
</dbReference>
<protein>
    <recommendedName>
        <fullName evidence="1">Peptide chain release factor 3</fullName>
        <shortName evidence="1">RF-3</shortName>
    </recommendedName>
</protein>
<accession>Q7NGL0</accession>